<comment type="function">
    <text evidence="1">Catalyzes the conversion of dethiobiotin (DTB) to biotin by the insertion of a sulfur atom into dethiobiotin via a radical-based mechanism.</text>
</comment>
<comment type="catalytic activity">
    <reaction evidence="1">
        <text>(4R,5S)-dethiobiotin + (sulfur carrier)-SH + 2 reduced [2Fe-2S]-[ferredoxin] + 2 S-adenosyl-L-methionine = (sulfur carrier)-H + biotin + 2 5'-deoxyadenosine + 2 L-methionine + 2 oxidized [2Fe-2S]-[ferredoxin]</text>
        <dbReference type="Rhea" id="RHEA:22060"/>
        <dbReference type="Rhea" id="RHEA-COMP:10000"/>
        <dbReference type="Rhea" id="RHEA-COMP:10001"/>
        <dbReference type="Rhea" id="RHEA-COMP:14737"/>
        <dbReference type="Rhea" id="RHEA-COMP:14739"/>
        <dbReference type="ChEBI" id="CHEBI:17319"/>
        <dbReference type="ChEBI" id="CHEBI:29917"/>
        <dbReference type="ChEBI" id="CHEBI:33737"/>
        <dbReference type="ChEBI" id="CHEBI:33738"/>
        <dbReference type="ChEBI" id="CHEBI:57586"/>
        <dbReference type="ChEBI" id="CHEBI:57844"/>
        <dbReference type="ChEBI" id="CHEBI:59789"/>
        <dbReference type="ChEBI" id="CHEBI:64428"/>
        <dbReference type="ChEBI" id="CHEBI:149473"/>
        <dbReference type="EC" id="2.8.1.6"/>
    </reaction>
</comment>
<comment type="cofactor">
    <cofactor evidence="1">
        <name>[4Fe-4S] cluster</name>
        <dbReference type="ChEBI" id="CHEBI:49883"/>
    </cofactor>
    <text evidence="1">Binds 1 [4Fe-4S] cluster. The cluster is coordinated with 3 cysteines and an exchangeable S-adenosyl-L-methionine.</text>
</comment>
<comment type="cofactor">
    <cofactor evidence="1">
        <name>[2Fe-2S] cluster</name>
        <dbReference type="ChEBI" id="CHEBI:190135"/>
    </cofactor>
    <text evidence="1">Binds 1 [2Fe-2S] cluster. The cluster is coordinated with 3 cysteines and 1 arginine.</text>
</comment>
<comment type="pathway">
    <text evidence="1">Cofactor biosynthesis; biotin biosynthesis; biotin from 7,8-diaminononanoate: step 2/2.</text>
</comment>
<comment type="subunit">
    <text evidence="1">Homodimer.</text>
</comment>
<comment type="similarity">
    <text evidence="1">Belongs to the radical SAM superfamily. Biotin synthase family.</text>
</comment>
<evidence type="ECO:0000255" key="1">
    <source>
        <dbReference type="HAMAP-Rule" id="MF_01694"/>
    </source>
</evidence>
<evidence type="ECO:0000255" key="2">
    <source>
        <dbReference type="PROSITE-ProRule" id="PRU01266"/>
    </source>
</evidence>
<keyword id="KW-0001">2Fe-2S</keyword>
<keyword id="KW-0004">4Fe-4S</keyword>
<keyword id="KW-0093">Biotin biosynthesis</keyword>
<keyword id="KW-0408">Iron</keyword>
<keyword id="KW-0411">Iron-sulfur</keyword>
<keyword id="KW-0479">Metal-binding</keyword>
<keyword id="KW-0949">S-adenosyl-L-methionine</keyword>
<keyword id="KW-0808">Transferase</keyword>
<proteinExistence type="inferred from homology"/>
<name>BIOB_BORPD</name>
<dbReference type="EC" id="2.8.1.6" evidence="1"/>
<dbReference type="EMBL" id="AM902716">
    <property type="protein sequence ID" value="CAP44006.1"/>
    <property type="molecule type" value="Genomic_DNA"/>
</dbReference>
<dbReference type="SMR" id="A9I023"/>
<dbReference type="STRING" id="94624.Bpet3663"/>
<dbReference type="KEGG" id="bpt:Bpet3663"/>
<dbReference type="eggNOG" id="COG0502">
    <property type="taxonomic scope" value="Bacteria"/>
</dbReference>
<dbReference type="UniPathway" id="UPA00078">
    <property type="reaction ID" value="UER00162"/>
</dbReference>
<dbReference type="Proteomes" id="UP000001225">
    <property type="component" value="Chromosome"/>
</dbReference>
<dbReference type="GO" id="GO:0051537">
    <property type="term" value="F:2 iron, 2 sulfur cluster binding"/>
    <property type="evidence" value="ECO:0007669"/>
    <property type="project" value="UniProtKB-KW"/>
</dbReference>
<dbReference type="GO" id="GO:0051539">
    <property type="term" value="F:4 iron, 4 sulfur cluster binding"/>
    <property type="evidence" value="ECO:0007669"/>
    <property type="project" value="UniProtKB-KW"/>
</dbReference>
<dbReference type="GO" id="GO:0004076">
    <property type="term" value="F:biotin synthase activity"/>
    <property type="evidence" value="ECO:0007669"/>
    <property type="project" value="UniProtKB-UniRule"/>
</dbReference>
<dbReference type="GO" id="GO:0005506">
    <property type="term" value="F:iron ion binding"/>
    <property type="evidence" value="ECO:0007669"/>
    <property type="project" value="UniProtKB-UniRule"/>
</dbReference>
<dbReference type="GO" id="GO:0009102">
    <property type="term" value="P:biotin biosynthetic process"/>
    <property type="evidence" value="ECO:0007669"/>
    <property type="project" value="UniProtKB-UniRule"/>
</dbReference>
<dbReference type="CDD" id="cd01335">
    <property type="entry name" value="Radical_SAM"/>
    <property type="match status" value="1"/>
</dbReference>
<dbReference type="FunFam" id="3.20.20.70:FF:000011">
    <property type="entry name" value="Biotin synthase"/>
    <property type="match status" value="1"/>
</dbReference>
<dbReference type="Gene3D" id="3.20.20.70">
    <property type="entry name" value="Aldolase class I"/>
    <property type="match status" value="1"/>
</dbReference>
<dbReference type="HAMAP" id="MF_01694">
    <property type="entry name" value="BioB"/>
    <property type="match status" value="1"/>
</dbReference>
<dbReference type="InterPro" id="IPR013785">
    <property type="entry name" value="Aldolase_TIM"/>
</dbReference>
<dbReference type="InterPro" id="IPR010722">
    <property type="entry name" value="BATS_dom"/>
</dbReference>
<dbReference type="InterPro" id="IPR002684">
    <property type="entry name" value="Biotin_synth/BioAB"/>
</dbReference>
<dbReference type="InterPro" id="IPR024177">
    <property type="entry name" value="Biotin_synthase"/>
</dbReference>
<dbReference type="InterPro" id="IPR006638">
    <property type="entry name" value="Elp3/MiaA/NifB-like_rSAM"/>
</dbReference>
<dbReference type="InterPro" id="IPR007197">
    <property type="entry name" value="rSAM"/>
</dbReference>
<dbReference type="NCBIfam" id="TIGR00433">
    <property type="entry name" value="bioB"/>
    <property type="match status" value="1"/>
</dbReference>
<dbReference type="PANTHER" id="PTHR22976">
    <property type="entry name" value="BIOTIN SYNTHASE"/>
    <property type="match status" value="1"/>
</dbReference>
<dbReference type="PANTHER" id="PTHR22976:SF2">
    <property type="entry name" value="BIOTIN SYNTHASE, MITOCHONDRIAL"/>
    <property type="match status" value="1"/>
</dbReference>
<dbReference type="Pfam" id="PF06968">
    <property type="entry name" value="BATS"/>
    <property type="match status" value="1"/>
</dbReference>
<dbReference type="Pfam" id="PF04055">
    <property type="entry name" value="Radical_SAM"/>
    <property type="match status" value="1"/>
</dbReference>
<dbReference type="PIRSF" id="PIRSF001619">
    <property type="entry name" value="Biotin_synth"/>
    <property type="match status" value="1"/>
</dbReference>
<dbReference type="SFLD" id="SFLDF00272">
    <property type="entry name" value="biotin_synthase"/>
    <property type="match status" value="1"/>
</dbReference>
<dbReference type="SFLD" id="SFLDG01278">
    <property type="entry name" value="biotin_synthase_like"/>
    <property type="match status" value="1"/>
</dbReference>
<dbReference type="SMART" id="SM00876">
    <property type="entry name" value="BATS"/>
    <property type="match status" value="1"/>
</dbReference>
<dbReference type="SMART" id="SM00729">
    <property type="entry name" value="Elp3"/>
    <property type="match status" value="1"/>
</dbReference>
<dbReference type="SUPFAM" id="SSF102114">
    <property type="entry name" value="Radical SAM enzymes"/>
    <property type="match status" value="1"/>
</dbReference>
<dbReference type="PROSITE" id="PS51918">
    <property type="entry name" value="RADICAL_SAM"/>
    <property type="match status" value="1"/>
</dbReference>
<accession>A9I023</accession>
<feature type="chain" id="PRO_0000381241" description="Biotin synthase">
    <location>
        <begin position="1"/>
        <end position="340"/>
    </location>
</feature>
<feature type="domain" description="Radical SAM core" evidence="2">
    <location>
        <begin position="53"/>
        <end position="280"/>
    </location>
</feature>
<feature type="binding site" evidence="1">
    <location>
        <position position="68"/>
    </location>
    <ligand>
        <name>[4Fe-4S] cluster</name>
        <dbReference type="ChEBI" id="CHEBI:49883"/>
        <note>4Fe-4S-S-AdoMet</note>
    </ligand>
</feature>
<feature type="binding site" evidence="1">
    <location>
        <position position="72"/>
    </location>
    <ligand>
        <name>[4Fe-4S] cluster</name>
        <dbReference type="ChEBI" id="CHEBI:49883"/>
        <note>4Fe-4S-S-AdoMet</note>
    </ligand>
</feature>
<feature type="binding site" evidence="1">
    <location>
        <position position="75"/>
    </location>
    <ligand>
        <name>[4Fe-4S] cluster</name>
        <dbReference type="ChEBI" id="CHEBI:49883"/>
        <note>4Fe-4S-S-AdoMet</note>
    </ligand>
</feature>
<feature type="binding site" evidence="1">
    <location>
        <position position="112"/>
    </location>
    <ligand>
        <name>[2Fe-2S] cluster</name>
        <dbReference type="ChEBI" id="CHEBI:190135"/>
    </ligand>
</feature>
<feature type="binding site" evidence="1">
    <location>
        <position position="143"/>
    </location>
    <ligand>
        <name>[2Fe-2S] cluster</name>
        <dbReference type="ChEBI" id="CHEBI:190135"/>
    </ligand>
</feature>
<feature type="binding site" evidence="1">
    <location>
        <position position="203"/>
    </location>
    <ligand>
        <name>[2Fe-2S] cluster</name>
        <dbReference type="ChEBI" id="CHEBI:190135"/>
    </ligand>
</feature>
<feature type="binding site" evidence="1">
    <location>
        <position position="275"/>
    </location>
    <ligand>
        <name>[2Fe-2S] cluster</name>
        <dbReference type="ChEBI" id="CHEBI:190135"/>
    </ligand>
</feature>
<sequence>MHISTIPVSDIAKPNAPAAGAWQADDVLALYELPFMDLLYRAQQVHRQHFDASAIQLSSLLSIKTGGCPEDCAYCPQSAHYDTGLAADKLMPLEDVLQAARAAQAGGAQRFCMGAAWRSPKPHHLDEVAEMIRAVKALGLETCVTLGMLRDGQAEQLKEAGLDYYNHNLDTSPEFYGSIISTRTYQDRLDTLARVRDAGLNVCCGGIVGMGESRRERAGLIAQLASLDPYPESVPINNLVQVEGTPLAGTEALDPFEFVRTIAVARIVMPLARVRLSAGRETMSDTLQALCFLAGANSLFCGDVLLTTGNPQVEADQRLLERLGMHAEGALPALPQATPA</sequence>
<reference key="1">
    <citation type="journal article" date="2008" name="BMC Genomics">
        <title>The missing link: Bordetella petrii is endowed with both the metabolic versatility of environmental bacteria and virulence traits of pathogenic Bordetellae.</title>
        <authorList>
            <person name="Gross R."/>
            <person name="Guzman C.A."/>
            <person name="Sebaihia M."/>
            <person name="Martin dos Santos V.A.P."/>
            <person name="Pieper D.H."/>
            <person name="Koebnik R."/>
            <person name="Lechner M."/>
            <person name="Bartels D."/>
            <person name="Buhrmester J."/>
            <person name="Choudhuri J.V."/>
            <person name="Ebensen T."/>
            <person name="Gaigalat L."/>
            <person name="Herrmann S."/>
            <person name="Khachane A.N."/>
            <person name="Larisch C."/>
            <person name="Link S."/>
            <person name="Linke B."/>
            <person name="Meyer F."/>
            <person name="Mormann S."/>
            <person name="Nakunst D."/>
            <person name="Rueckert C."/>
            <person name="Schneiker-Bekel S."/>
            <person name="Schulze K."/>
            <person name="Voerholter F.-J."/>
            <person name="Yevsa T."/>
            <person name="Engle J.T."/>
            <person name="Goldman W.E."/>
            <person name="Puehler A."/>
            <person name="Goebel U.B."/>
            <person name="Goesmann A."/>
            <person name="Bloecker H."/>
            <person name="Kaiser O."/>
            <person name="Martinez-Arias R."/>
        </authorList>
    </citation>
    <scope>NUCLEOTIDE SEQUENCE [LARGE SCALE GENOMIC DNA]</scope>
    <source>
        <strain>ATCC BAA-461 / DSM 12804 / CCUG 43448</strain>
    </source>
</reference>
<protein>
    <recommendedName>
        <fullName evidence="1">Biotin synthase</fullName>
        <ecNumber evidence="1">2.8.1.6</ecNumber>
    </recommendedName>
</protein>
<gene>
    <name evidence="1" type="primary">bioB</name>
    <name type="ordered locus">Bpet3663</name>
</gene>
<organism>
    <name type="scientific">Bordetella petrii (strain ATCC BAA-461 / DSM 12804 / CCUG 43448)</name>
    <dbReference type="NCBI Taxonomy" id="340100"/>
    <lineage>
        <taxon>Bacteria</taxon>
        <taxon>Pseudomonadati</taxon>
        <taxon>Pseudomonadota</taxon>
        <taxon>Betaproteobacteria</taxon>
        <taxon>Burkholderiales</taxon>
        <taxon>Alcaligenaceae</taxon>
        <taxon>Bordetella</taxon>
    </lineage>
</organism>